<accession>Q32D87</accession>
<protein>
    <recommendedName>
        <fullName evidence="1">4-hydroxy-tetrahydrodipicolinate synthase</fullName>
        <shortName evidence="1">HTPA synthase</shortName>
        <ecNumber evidence="1">4.3.3.7</ecNumber>
    </recommendedName>
</protein>
<evidence type="ECO:0000255" key="1">
    <source>
        <dbReference type="HAMAP-Rule" id="MF_00418"/>
    </source>
</evidence>
<evidence type="ECO:0000305" key="2"/>
<dbReference type="EC" id="4.3.3.7" evidence="1"/>
<dbReference type="EMBL" id="CP000034">
    <property type="protein sequence ID" value="ABB62718.1"/>
    <property type="molecule type" value="Genomic_DNA"/>
</dbReference>
<dbReference type="RefSeq" id="WP_005017534.1">
    <property type="nucleotide sequence ID" value="NC_007606.1"/>
</dbReference>
<dbReference type="RefSeq" id="YP_404209.1">
    <property type="nucleotide sequence ID" value="NC_007606.1"/>
</dbReference>
<dbReference type="SMR" id="Q32D87"/>
<dbReference type="STRING" id="300267.SDY_2667"/>
<dbReference type="EnsemblBacteria" id="ABB62718">
    <property type="protein sequence ID" value="ABB62718"/>
    <property type="gene ID" value="SDY_2667"/>
</dbReference>
<dbReference type="KEGG" id="sdy:SDY_2667"/>
<dbReference type="PATRIC" id="fig|300267.13.peg.3218"/>
<dbReference type="HOGENOM" id="CLU_049343_7_1_6"/>
<dbReference type="UniPathway" id="UPA00034">
    <property type="reaction ID" value="UER00017"/>
</dbReference>
<dbReference type="Proteomes" id="UP000002716">
    <property type="component" value="Chromosome"/>
</dbReference>
<dbReference type="GO" id="GO:0005829">
    <property type="term" value="C:cytosol"/>
    <property type="evidence" value="ECO:0007669"/>
    <property type="project" value="TreeGrafter"/>
</dbReference>
<dbReference type="GO" id="GO:0008840">
    <property type="term" value="F:4-hydroxy-tetrahydrodipicolinate synthase activity"/>
    <property type="evidence" value="ECO:0007669"/>
    <property type="project" value="UniProtKB-UniRule"/>
</dbReference>
<dbReference type="GO" id="GO:0019877">
    <property type="term" value="P:diaminopimelate biosynthetic process"/>
    <property type="evidence" value="ECO:0007669"/>
    <property type="project" value="UniProtKB-UniRule"/>
</dbReference>
<dbReference type="GO" id="GO:0009089">
    <property type="term" value="P:lysine biosynthetic process via diaminopimelate"/>
    <property type="evidence" value="ECO:0007669"/>
    <property type="project" value="UniProtKB-UniRule"/>
</dbReference>
<dbReference type="CDD" id="cd00950">
    <property type="entry name" value="DHDPS"/>
    <property type="match status" value="1"/>
</dbReference>
<dbReference type="FunFam" id="3.20.20.70:FF:000046">
    <property type="entry name" value="4-hydroxy-tetrahydrodipicolinate synthase"/>
    <property type="match status" value="1"/>
</dbReference>
<dbReference type="Gene3D" id="3.20.20.70">
    <property type="entry name" value="Aldolase class I"/>
    <property type="match status" value="1"/>
</dbReference>
<dbReference type="HAMAP" id="MF_00418">
    <property type="entry name" value="DapA"/>
    <property type="match status" value="1"/>
</dbReference>
<dbReference type="InterPro" id="IPR013785">
    <property type="entry name" value="Aldolase_TIM"/>
</dbReference>
<dbReference type="InterPro" id="IPR005263">
    <property type="entry name" value="DapA"/>
</dbReference>
<dbReference type="InterPro" id="IPR002220">
    <property type="entry name" value="DapA-like"/>
</dbReference>
<dbReference type="InterPro" id="IPR020625">
    <property type="entry name" value="Schiff_base-form_aldolases_AS"/>
</dbReference>
<dbReference type="InterPro" id="IPR020624">
    <property type="entry name" value="Schiff_base-form_aldolases_CS"/>
</dbReference>
<dbReference type="NCBIfam" id="TIGR00674">
    <property type="entry name" value="dapA"/>
    <property type="match status" value="1"/>
</dbReference>
<dbReference type="PANTHER" id="PTHR12128:SF66">
    <property type="entry name" value="4-HYDROXY-2-OXOGLUTARATE ALDOLASE, MITOCHONDRIAL"/>
    <property type="match status" value="1"/>
</dbReference>
<dbReference type="PANTHER" id="PTHR12128">
    <property type="entry name" value="DIHYDRODIPICOLINATE SYNTHASE"/>
    <property type="match status" value="1"/>
</dbReference>
<dbReference type="Pfam" id="PF00701">
    <property type="entry name" value="DHDPS"/>
    <property type="match status" value="1"/>
</dbReference>
<dbReference type="PIRSF" id="PIRSF001365">
    <property type="entry name" value="DHDPS"/>
    <property type="match status" value="1"/>
</dbReference>
<dbReference type="PRINTS" id="PR00146">
    <property type="entry name" value="DHPICSNTHASE"/>
</dbReference>
<dbReference type="SMART" id="SM01130">
    <property type="entry name" value="DHDPS"/>
    <property type="match status" value="1"/>
</dbReference>
<dbReference type="SUPFAM" id="SSF51569">
    <property type="entry name" value="Aldolase"/>
    <property type="match status" value="1"/>
</dbReference>
<dbReference type="PROSITE" id="PS00665">
    <property type="entry name" value="DHDPS_1"/>
    <property type="match status" value="1"/>
</dbReference>
<dbReference type="PROSITE" id="PS00666">
    <property type="entry name" value="DHDPS_2"/>
    <property type="match status" value="1"/>
</dbReference>
<organism>
    <name type="scientific">Shigella dysenteriae serotype 1 (strain Sd197)</name>
    <dbReference type="NCBI Taxonomy" id="300267"/>
    <lineage>
        <taxon>Bacteria</taxon>
        <taxon>Pseudomonadati</taxon>
        <taxon>Pseudomonadota</taxon>
        <taxon>Gammaproteobacteria</taxon>
        <taxon>Enterobacterales</taxon>
        <taxon>Enterobacteriaceae</taxon>
        <taxon>Shigella</taxon>
    </lineage>
</organism>
<feature type="chain" id="PRO_1000050272" description="4-hydroxy-tetrahydrodipicolinate synthase">
    <location>
        <begin position="1"/>
        <end position="292"/>
    </location>
</feature>
<feature type="active site" description="Proton donor/acceptor" evidence="1">
    <location>
        <position position="133"/>
    </location>
</feature>
<feature type="active site" description="Schiff-base intermediate with substrate" evidence="1">
    <location>
        <position position="161"/>
    </location>
</feature>
<feature type="binding site" evidence="1">
    <location>
        <position position="45"/>
    </location>
    <ligand>
        <name>pyruvate</name>
        <dbReference type="ChEBI" id="CHEBI:15361"/>
    </ligand>
</feature>
<feature type="binding site" evidence="1">
    <location>
        <position position="203"/>
    </location>
    <ligand>
        <name>pyruvate</name>
        <dbReference type="ChEBI" id="CHEBI:15361"/>
    </ligand>
</feature>
<feature type="site" description="Part of a proton relay during catalysis" evidence="1">
    <location>
        <position position="44"/>
    </location>
</feature>
<feature type="site" description="Part of a proton relay during catalysis" evidence="1">
    <location>
        <position position="107"/>
    </location>
</feature>
<reference key="1">
    <citation type="journal article" date="2005" name="Nucleic Acids Res.">
        <title>Genome dynamics and diversity of Shigella species, the etiologic agents of bacillary dysentery.</title>
        <authorList>
            <person name="Yang F."/>
            <person name="Yang J."/>
            <person name="Zhang X."/>
            <person name="Chen L."/>
            <person name="Jiang Y."/>
            <person name="Yan Y."/>
            <person name="Tang X."/>
            <person name="Wang J."/>
            <person name="Xiong Z."/>
            <person name="Dong J."/>
            <person name="Xue Y."/>
            <person name="Zhu Y."/>
            <person name="Xu X."/>
            <person name="Sun L."/>
            <person name="Chen S."/>
            <person name="Nie H."/>
            <person name="Peng J."/>
            <person name="Xu J."/>
            <person name="Wang Y."/>
            <person name="Yuan Z."/>
            <person name="Wen Y."/>
            <person name="Yao Z."/>
            <person name="Shen Y."/>
            <person name="Qiang B."/>
            <person name="Hou Y."/>
            <person name="Yu J."/>
            <person name="Jin Q."/>
        </authorList>
    </citation>
    <scope>NUCLEOTIDE SEQUENCE [LARGE SCALE GENOMIC DNA]</scope>
    <source>
        <strain>Sd197</strain>
    </source>
</reference>
<name>DAPA_SHIDS</name>
<sequence>MFTGSIVAIVTPMDEKGNVCRASLKKLIDYHVASGTSAIVSVGTTGESATLNHDEHADVVMMTLELANGRIPVIAGTGANATAEAISLTQRFNDSGIVGCLTVTPYYNRPSQEGLYQHFKAIAEHTDLPQILYNVPSRTGCDLLPETVGRLAKVKNIIGIKEATGNLTRVNQIKELVSDDFVLLSGDDVSALDFMQLGGHGVISVTANVAARDMAQMCKLAAEGHFAEARVINQRLMPLHNKLFVEPNPIPVKWACKELGLVATDTLRLPMTPITDSGRETVRAALKHAGLL</sequence>
<keyword id="KW-0028">Amino-acid biosynthesis</keyword>
<keyword id="KW-0963">Cytoplasm</keyword>
<keyword id="KW-0220">Diaminopimelate biosynthesis</keyword>
<keyword id="KW-0456">Lyase</keyword>
<keyword id="KW-0457">Lysine biosynthesis</keyword>
<keyword id="KW-1185">Reference proteome</keyword>
<keyword id="KW-0704">Schiff base</keyword>
<comment type="function">
    <text evidence="1">Catalyzes the condensation of (S)-aspartate-beta-semialdehyde [(S)-ASA] and pyruvate to 4-hydroxy-tetrahydrodipicolinate (HTPA).</text>
</comment>
<comment type="catalytic activity">
    <reaction evidence="1">
        <text>L-aspartate 4-semialdehyde + pyruvate = (2S,4S)-4-hydroxy-2,3,4,5-tetrahydrodipicolinate + H2O + H(+)</text>
        <dbReference type="Rhea" id="RHEA:34171"/>
        <dbReference type="ChEBI" id="CHEBI:15361"/>
        <dbReference type="ChEBI" id="CHEBI:15377"/>
        <dbReference type="ChEBI" id="CHEBI:15378"/>
        <dbReference type="ChEBI" id="CHEBI:67139"/>
        <dbReference type="ChEBI" id="CHEBI:537519"/>
        <dbReference type="EC" id="4.3.3.7"/>
    </reaction>
</comment>
<comment type="pathway">
    <text evidence="1">Amino-acid biosynthesis; L-lysine biosynthesis via DAP pathway; (S)-tetrahydrodipicolinate from L-aspartate: step 3/4.</text>
</comment>
<comment type="subunit">
    <text evidence="1">Homotetramer; dimer of dimers.</text>
</comment>
<comment type="subcellular location">
    <subcellularLocation>
        <location evidence="1">Cytoplasm</location>
    </subcellularLocation>
</comment>
<comment type="similarity">
    <text evidence="1">Belongs to the DapA family.</text>
</comment>
<comment type="caution">
    <text evidence="2">Was originally thought to be a dihydrodipicolinate synthase (DHDPS), catalyzing the condensation of (S)-aspartate-beta-semialdehyde [(S)-ASA] and pyruvate to dihydrodipicolinate (DHDP). However, it was shown in E.coli that the product of the enzymatic reaction is not dihydrodipicolinate but in fact (4S)-4-hydroxy-2,3,4,5-tetrahydro-(2S)-dipicolinic acid (HTPA), and that the consecutive dehydration reaction leading to DHDP is not spontaneous but catalyzed by DapB.</text>
</comment>
<gene>
    <name evidence="1" type="primary">dapA</name>
    <name type="ordered locus">SDY_2667</name>
</gene>
<proteinExistence type="inferred from homology"/>